<dbReference type="EC" id="1.17.7.4" evidence="1"/>
<dbReference type="EMBL" id="AP009240">
    <property type="protein sequence ID" value="BAG75551.1"/>
    <property type="molecule type" value="Genomic_DNA"/>
</dbReference>
<dbReference type="RefSeq" id="WP_001166395.1">
    <property type="nucleotide sequence ID" value="NC_011415.1"/>
</dbReference>
<dbReference type="SMR" id="B6HYX7"/>
<dbReference type="GeneID" id="93777407"/>
<dbReference type="KEGG" id="ecy:ECSE_0027"/>
<dbReference type="HOGENOM" id="CLU_027486_1_0_6"/>
<dbReference type="UniPathway" id="UPA00056">
    <property type="reaction ID" value="UER00097"/>
</dbReference>
<dbReference type="UniPathway" id="UPA00059">
    <property type="reaction ID" value="UER00105"/>
</dbReference>
<dbReference type="Proteomes" id="UP000008199">
    <property type="component" value="Chromosome"/>
</dbReference>
<dbReference type="GO" id="GO:0051539">
    <property type="term" value="F:4 iron, 4 sulfur cluster binding"/>
    <property type="evidence" value="ECO:0007669"/>
    <property type="project" value="UniProtKB-UniRule"/>
</dbReference>
<dbReference type="GO" id="GO:0051745">
    <property type="term" value="F:4-hydroxy-3-methylbut-2-enyl diphosphate reductase activity"/>
    <property type="evidence" value="ECO:0007669"/>
    <property type="project" value="UniProtKB-UniRule"/>
</dbReference>
<dbReference type="GO" id="GO:0046872">
    <property type="term" value="F:metal ion binding"/>
    <property type="evidence" value="ECO:0007669"/>
    <property type="project" value="UniProtKB-KW"/>
</dbReference>
<dbReference type="GO" id="GO:0050992">
    <property type="term" value="P:dimethylallyl diphosphate biosynthetic process"/>
    <property type="evidence" value="ECO:0007669"/>
    <property type="project" value="UniProtKB-UniRule"/>
</dbReference>
<dbReference type="GO" id="GO:0019288">
    <property type="term" value="P:isopentenyl diphosphate biosynthetic process, methylerythritol 4-phosphate pathway"/>
    <property type="evidence" value="ECO:0007669"/>
    <property type="project" value="UniProtKB-UniRule"/>
</dbReference>
<dbReference type="GO" id="GO:0016114">
    <property type="term" value="P:terpenoid biosynthetic process"/>
    <property type="evidence" value="ECO:0007669"/>
    <property type="project" value="UniProtKB-UniRule"/>
</dbReference>
<dbReference type="CDD" id="cd13944">
    <property type="entry name" value="lytB_ispH"/>
    <property type="match status" value="1"/>
</dbReference>
<dbReference type="FunFam" id="3.40.1010.20:FF:000001">
    <property type="entry name" value="4-hydroxy-3-methylbut-2-enyl diphosphate reductase"/>
    <property type="match status" value="1"/>
</dbReference>
<dbReference type="FunFam" id="3.40.50.11270:FF:000001">
    <property type="entry name" value="4-hydroxy-3-methylbut-2-enyl diphosphate reductase"/>
    <property type="match status" value="1"/>
</dbReference>
<dbReference type="Gene3D" id="3.40.50.11270">
    <property type="match status" value="1"/>
</dbReference>
<dbReference type="Gene3D" id="3.40.1010.20">
    <property type="entry name" value="4-hydroxy-3-methylbut-2-enyl diphosphate reductase, catalytic domain"/>
    <property type="match status" value="2"/>
</dbReference>
<dbReference type="HAMAP" id="MF_00191">
    <property type="entry name" value="IspH"/>
    <property type="match status" value="1"/>
</dbReference>
<dbReference type="InterPro" id="IPR003451">
    <property type="entry name" value="LytB/IspH"/>
</dbReference>
<dbReference type="NCBIfam" id="TIGR00216">
    <property type="entry name" value="ispH_lytB"/>
    <property type="match status" value="1"/>
</dbReference>
<dbReference type="NCBIfam" id="NF002188">
    <property type="entry name" value="PRK01045.1-2"/>
    <property type="match status" value="1"/>
</dbReference>
<dbReference type="NCBIfam" id="NF002190">
    <property type="entry name" value="PRK01045.1-4"/>
    <property type="match status" value="1"/>
</dbReference>
<dbReference type="PANTHER" id="PTHR30426">
    <property type="entry name" value="4-HYDROXY-3-METHYLBUT-2-ENYL DIPHOSPHATE REDUCTASE"/>
    <property type="match status" value="1"/>
</dbReference>
<dbReference type="PANTHER" id="PTHR30426:SF0">
    <property type="entry name" value="4-HYDROXY-3-METHYLBUT-2-ENYL DIPHOSPHATE REDUCTASE"/>
    <property type="match status" value="1"/>
</dbReference>
<dbReference type="Pfam" id="PF02401">
    <property type="entry name" value="LYTB"/>
    <property type="match status" value="1"/>
</dbReference>
<gene>
    <name evidence="1" type="primary">ispH</name>
    <name type="ordered locus">ECSE_0027</name>
</gene>
<comment type="function">
    <text evidence="1">Catalyzes the conversion of 1-hydroxy-2-methyl-2-(E)-butenyl 4-diphosphate (HMBPP) into a mixture of isopentenyl diphosphate (IPP) and dimethylallyl diphosphate (DMAPP). Acts in the terminal step of the DOXP/MEP pathway for isoprenoid precursor biosynthesis.</text>
</comment>
<comment type="catalytic activity">
    <reaction evidence="1">
        <text>isopentenyl diphosphate + 2 oxidized [2Fe-2S]-[ferredoxin] + H2O = (2E)-4-hydroxy-3-methylbut-2-enyl diphosphate + 2 reduced [2Fe-2S]-[ferredoxin] + 2 H(+)</text>
        <dbReference type="Rhea" id="RHEA:24488"/>
        <dbReference type="Rhea" id="RHEA-COMP:10000"/>
        <dbReference type="Rhea" id="RHEA-COMP:10001"/>
        <dbReference type="ChEBI" id="CHEBI:15377"/>
        <dbReference type="ChEBI" id="CHEBI:15378"/>
        <dbReference type="ChEBI" id="CHEBI:33737"/>
        <dbReference type="ChEBI" id="CHEBI:33738"/>
        <dbReference type="ChEBI" id="CHEBI:128753"/>
        <dbReference type="ChEBI" id="CHEBI:128769"/>
        <dbReference type="EC" id="1.17.7.4"/>
    </reaction>
</comment>
<comment type="catalytic activity">
    <reaction evidence="1">
        <text>dimethylallyl diphosphate + 2 oxidized [2Fe-2S]-[ferredoxin] + H2O = (2E)-4-hydroxy-3-methylbut-2-enyl diphosphate + 2 reduced [2Fe-2S]-[ferredoxin] + 2 H(+)</text>
        <dbReference type="Rhea" id="RHEA:24825"/>
        <dbReference type="Rhea" id="RHEA-COMP:10000"/>
        <dbReference type="Rhea" id="RHEA-COMP:10001"/>
        <dbReference type="ChEBI" id="CHEBI:15377"/>
        <dbReference type="ChEBI" id="CHEBI:15378"/>
        <dbReference type="ChEBI" id="CHEBI:33737"/>
        <dbReference type="ChEBI" id="CHEBI:33738"/>
        <dbReference type="ChEBI" id="CHEBI:57623"/>
        <dbReference type="ChEBI" id="CHEBI:128753"/>
        <dbReference type="EC" id="1.17.7.4"/>
    </reaction>
</comment>
<comment type="cofactor">
    <cofactor evidence="1">
        <name>[4Fe-4S] cluster</name>
        <dbReference type="ChEBI" id="CHEBI:49883"/>
    </cofactor>
    <text evidence="1">Binds 1 [4Fe-4S] cluster per subunit.</text>
</comment>
<comment type="pathway">
    <text evidence="1">Isoprenoid biosynthesis; dimethylallyl diphosphate biosynthesis; dimethylallyl diphosphate from (2E)-4-hydroxy-3-methylbutenyl diphosphate: step 1/1.</text>
</comment>
<comment type="pathway">
    <text evidence="1">Isoprenoid biosynthesis; isopentenyl diphosphate biosynthesis via DXP pathway; isopentenyl diphosphate from 1-deoxy-D-xylulose 5-phosphate: step 6/6.</text>
</comment>
<comment type="subunit">
    <text evidence="1">Homodimer.</text>
</comment>
<comment type="similarity">
    <text evidence="1">Belongs to the IspH family.</text>
</comment>
<name>ISPH_ECOSE</name>
<keyword id="KW-0004">4Fe-4S</keyword>
<keyword id="KW-0408">Iron</keyword>
<keyword id="KW-0411">Iron-sulfur</keyword>
<keyword id="KW-0414">Isoprene biosynthesis</keyword>
<keyword id="KW-0479">Metal-binding</keyword>
<keyword id="KW-0560">Oxidoreductase</keyword>
<sequence length="316" mass="34775">MQILLANPRGFCAGVDRAISIVENALAIYGAPIYVRHEVVHNRYVVDSLRERGAIFIEQISEVPDGAILIFSAHGVSQAVRNEAKSRDLTVFDATCPLVTKVHMEVARASRRGEESILIGHAGHPEVEGTMGQYSNPEGGMYLVESPDDVWKLTVKNEEKLSFMTQTTLSVDDTSDVIDALRKRFPKIVGPRKDDICYATTNRQEAVRALAEQAEVVLVVGSKNSSNSNRLAELAQRMGKRAFLIDDAKDIQEEWVKEVKCVGVTAGASAPDILVQNVVARLQQLGGGEAIPLEGREENIVFEVPKELRVDIREVD</sequence>
<organism>
    <name type="scientific">Escherichia coli (strain SE11)</name>
    <dbReference type="NCBI Taxonomy" id="409438"/>
    <lineage>
        <taxon>Bacteria</taxon>
        <taxon>Pseudomonadati</taxon>
        <taxon>Pseudomonadota</taxon>
        <taxon>Gammaproteobacteria</taxon>
        <taxon>Enterobacterales</taxon>
        <taxon>Enterobacteriaceae</taxon>
        <taxon>Escherichia</taxon>
    </lineage>
</organism>
<protein>
    <recommendedName>
        <fullName evidence="1">4-hydroxy-3-methylbut-2-enyl diphosphate reductase</fullName>
        <shortName evidence="1">HMBPP reductase</shortName>
        <ecNumber evidence="1">1.17.7.4</ecNumber>
    </recommendedName>
</protein>
<evidence type="ECO:0000255" key="1">
    <source>
        <dbReference type="HAMAP-Rule" id="MF_00191"/>
    </source>
</evidence>
<reference key="1">
    <citation type="journal article" date="2008" name="DNA Res.">
        <title>Complete genome sequence and comparative analysis of the wild-type commensal Escherichia coli strain SE11 isolated from a healthy adult.</title>
        <authorList>
            <person name="Oshima K."/>
            <person name="Toh H."/>
            <person name="Ogura Y."/>
            <person name="Sasamoto H."/>
            <person name="Morita H."/>
            <person name="Park S.-H."/>
            <person name="Ooka T."/>
            <person name="Iyoda S."/>
            <person name="Taylor T.D."/>
            <person name="Hayashi T."/>
            <person name="Itoh K."/>
            <person name="Hattori M."/>
        </authorList>
    </citation>
    <scope>NUCLEOTIDE SEQUENCE [LARGE SCALE GENOMIC DNA]</scope>
    <source>
        <strain>SE11</strain>
    </source>
</reference>
<proteinExistence type="inferred from homology"/>
<accession>B6HYX7</accession>
<feature type="chain" id="PRO_1000098947" description="4-hydroxy-3-methylbut-2-enyl diphosphate reductase">
    <location>
        <begin position="1"/>
        <end position="316"/>
    </location>
</feature>
<feature type="active site" description="Proton donor" evidence="1">
    <location>
        <position position="126"/>
    </location>
</feature>
<feature type="binding site" evidence="1">
    <location>
        <position position="12"/>
    </location>
    <ligand>
        <name>[4Fe-4S] cluster</name>
        <dbReference type="ChEBI" id="CHEBI:49883"/>
    </ligand>
</feature>
<feature type="binding site" evidence="1">
    <location>
        <position position="41"/>
    </location>
    <ligand>
        <name>(2E)-4-hydroxy-3-methylbut-2-enyl diphosphate</name>
        <dbReference type="ChEBI" id="CHEBI:128753"/>
    </ligand>
</feature>
<feature type="binding site" evidence="1">
    <location>
        <position position="41"/>
    </location>
    <ligand>
        <name>dimethylallyl diphosphate</name>
        <dbReference type="ChEBI" id="CHEBI:57623"/>
    </ligand>
</feature>
<feature type="binding site" evidence="1">
    <location>
        <position position="41"/>
    </location>
    <ligand>
        <name>isopentenyl diphosphate</name>
        <dbReference type="ChEBI" id="CHEBI:128769"/>
    </ligand>
</feature>
<feature type="binding site" evidence="1">
    <location>
        <position position="74"/>
    </location>
    <ligand>
        <name>(2E)-4-hydroxy-3-methylbut-2-enyl diphosphate</name>
        <dbReference type="ChEBI" id="CHEBI:128753"/>
    </ligand>
</feature>
<feature type="binding site" evidence="1">
    <location>
        <position position="74"/>
    </location>
    <ligand>
        <name>dimethylallyl diphosphate</name>
        <dbReference type="ChEBI" id="CHEBI:57623"/>
    </ligand>
</feature>
<feature type="binding site" evidence="1">
    <location>
        <position position="74"/>
    </location>
    <ligand>
        <name>isopentenyl diphosphate</name>
        <dbReference type="ChEBI" id="CHEBI:128769"/>
    </ligand>
</feature>
<feature type="binding site" evidence="1">
    <location>
        <position position="96"/>
    </location>
    <ligand>
        <name>[4Fe-4S] cluster</name>
        <dbReference type="ChEBI" id="CHEBI:49883"/>
    </ligand>
</feature>
<feature type="binding site" evidence="1">
    <location>
        <position position="124"/>
    </location>
    <ligand>
        <name>(2E)-4-hydroxy-3-methylbut-2-enyl diphosphate</name>
        <dbReference type="ChEBI" id="CHEBI:128753"/>
    </ligand>
</feature>
<feature type="binding site" evidence="1">
    <location>
        <position position="124"/>
    </location>
    <ligand>
        <name>dimethylallyl diphosphate</name>
        <dbReference type="ChEBI" id="CHEBI:57623"/>
    </ligand>
</feature>
<feature type="binding site" evidence="1">
    <location>
        <position position="124"/>
    </location>
    <ligand>
        <name>isopentenyl diphosphate</name>
        <dbReference type="ChEBI" id="CHEBI:128769"/>
    </ligand>
</feature>
<feature type="binding site" evidence="1">
    <location>
        <position position="167"/>
    </location>
    <ligand>
        <name>(2E)-4-hydroxy-3-methylbut-2-enyl diphosphate</name>
        <dbReference type="ChEBI" id="CHEBI:128753"/>
    </ligand>
</feature>
<feature type="binding site" evidence="1">
    <location>
        <position position="197"/>
    </location>
    <ligand>
        <name>[4Fe-4S] cluster</name>
        <dbReference type="ChEBI" id="CHEBI:49883"/>
    </ligand>
</feature>
<feature type="binding site" evidence="1">
    <location>
        <position position="225"/>
    </location>
    <ligand>
        <name>(2E)-4-hydroxy-3-methylbut-2-enyl diphosphate</name>
        <dbReference type="ChEBI" id="CHEBI:128753"/>
    </ligand>
</feature>
<feature type="binding site" evidence="1">
    <location>
        <position position="225"/>
    </location>
    <ligand>
        <name>dimethylallyl diphosphate</name>
        <dbReference type="ChEBI" id="CHEBI:57623"/>
    </ligand>
</feature>
<feature type="binding site" evidence="1">
    <location>
        <position position="225"/>
    </location>
    <ligand>
        <name>isopentenyl diphosphate</name>
        <dbReference type="ChEBI" id="CHEBI:128769"/>
    </ligand>
</feature>
<feature type="binding site" evidence="1">
    <location>
        <position position="226"/>
    </location>
    <ligand>
        <name>(2E)-4-hydroxy-3-methylbut-2-enyl diphosphate</name>
        <dbReference type="ChEBI" id="CHEBI:128753"/>
    </ligand>
</feature>
<feature type="binding site" evidence="1">
    <location>
        <position position="226"/>
    </location>
    <ligand>
        <name>dimethylallyl diphosphate</name>
        <dbReference type="ChEBI" id="CHEBI:57623"/>
    </ligand>
</feature>
<feature type="binding site" evidence="1">
    <location>
        <position position="226"/>
    </location>
    <ligand>
        <name>isopentenyl diphosphate</name>
        <dbReference type="ChEBI" id="CHEBI:128769"/>
    </ligand>
</feature>
<feature type="binding site" evidence="1">
    <location>
        <position position="227"/>
    </location>
    <ligand>
        <name>(2E)-4-hydroxy-3-methylbut-2-enyl diphosphate</name>
        <dbReference type="ChEBI" id="CHEBI:128753"/>
    </ligand>
</feature>
<feature type="binding site" evidence="1">
    <location>
        <position position="227"/>
    </location>
    <ligand>
        <name>dimethylallyl diphosphate</name>
        <dbReference type="ChEBI" id="CHEBI:57623"/>
    </ligand>
</feature>
<feature type="binding site" evidence="1">
    <location>
        <position position="227"/>
    </location>
    <ligand>
        <name>isopentenyl diphosphate</name>
        <dbReference type="ChEBI" id="CHEBI:128769"/>
    </ligand>
</feature>
<feature type="binding site" evidence="1">
    <location>
        <position position="269"/>
    </location>
    <ligand>
        <name>(2E)-4-hydroxy-3-methylbut-2-enyl diphosphate</name>
        <dbReference type="ChEBI" id="CHEBI:128753"/>
    </ligand>
</feature>
<feature type="binding site" evidence="1">
    <location>
        <position position="269"/>
    </location>
    <ligand>
        <name>dimethylallyl diphosphate</name>
        <dbReference type="ChEBI" id="CHEBI:57623"/>
    </ligand>
</feature>
<feature type="binding site" evidence="1">
    <location>
        <position position="269"/>
    </location>
    <ligand>
        <name>isopentenyl diphosphate</name>
        <dbReference type="ChEBI" id="CHEBI:128769"/>
    </ligand>
</feature>